<name>ZN664_HUMAN</name>
<keyword id="KW-0238">DNA-binding</keyword>
<keyword id="KW-1017">Isopeptide bond</keyword>
<keyword id="KW-0479">Metal-binding</keyword>
<keyword id="KW-0539">Nucleus</keyword>
<keyword id="KW-1267">Proteomics identification</keyword>
<keyword id="KW-1185">Reference proteome</keyword>
<keyword id="KW-0677">Repeat</keyword>
<keyword id="KW-0804">Transcription</keyword>
<keyword id="KW-0805">Transcription regulation</keyword>
<keyword id="KW-0832">Ubl conjugation</keyword>
<keyword id="KW-0862">Zinc</keyword>
<keyword id="KW-0863">Zinc-finger</keyword>
<sequence length="261" mass="30284">MIYKCPMCREFFSERADLFMHQKIHTAEKPHKCDKCDKGFFHISELHIHWRDHTGEKVYKCDDCGKDFSTTTKLNRHKKIHTVEKPYKCYECGKAFNWSSHLQIHMRVHTGEKPYVCSECGRGFSNSSNLCMHQRVHTGEKPFKCEECGKAFRHTSSLCMHQRVHTGEKPYKCYECGKAFSQSSSLCIHQRVHTGEKPYRCCGCGKAFSQSSSLCIHQRVHTGEKPFKCDECGKAFSQSTSLCIHQRVHTKERNHLKISVI</sequence>
<proteinExistence type="evidence at protein level"/>
<feature type="chain" id="PRO_0000296273" description="Zinc finger protein 664">
    <location>
        <begin position="1"/>
        <end position="261"/>
    </location>
</feature>
<feature type="zinc finger region" description="C2H2-type 1" evidence="1">
    <location>
        <begin position="3"/>
        <end position="25"/>
    </location>
</feature>
<feature type="zinc finger region" description="C2H2-type 2" evidence="1">
    <location>
        <begin position="31"/>
        <end position="53"/>
    </location>
</feature>
<feature type="zinc finger region" description="C2H2-type 3" evidence="1">
    <location>
        <begin position="59"/>
        <end position="81"/>
    </location>
</feature>
<feature type="zinc finger region" description="C2H2-type 4" evidence="1">
    <location>
        <begin position="87"/>
        <end position="109"/>
    </location>
</feature>
<feature type="zinc finger region" description="C2H2-type 5" evidence="1">
    <location>
        <begin position="115"/>
        <end position="137"/>
    </location>
</feature>
<feature type="zinc finger region" description="C2H2-type 6" evidence="1">
    <location>
        <begin position="143"/>
        <end position="165"/>
    </location>
</feature>
<feature type="zinc finger region" description="C2H2-type 7" evidence="1">
    <location>
        <begin position="171"/>
        <end position="193"/>
    </location>
</feature>
<feature type="zinc finger region" description="C2H2-type 8" evidence="1">
    <location>
        <begin position="199"/>
        <end position="221"/>
    </location>
</feature>
<feature type="zinc finger region" description="C2H2-type 9" evidence="1">
    <location>
        <begin position="227"/>
        <end position="249"/>
    </location>
</feature>
<feature type="cross-link" description="Glycyl lysine isopeptide (Lys-Gly) (interchain with G-Cter in SUMO2)" evidence="4">
    <location>
        <position position="257"/>
    </location>
</feature>
<feature type="sequence conflict" description="In Ref. 5; AAC41997." evidence="2" ref="5">
    <original>I</original>
    <variation>V</variation>
    <location>
        <position position="24"/>
    </location>
</feature>
<feature type="sequence conflict" description="In Ref. 5; AAC41997." evidence="2" ref="5">
    <original>K</original>
    <variation>E</variation>
    <location>
        <position position="113"/>
    </location>
</feature>
<feature type="sequence conflict" description="In Ref. 4; AAH51696." evidence="2" ref="4">
    <original>G</original>
    <variation>R</variation>
    <location>
        <position position="139"/>
    </location>
</feature>
<feature type="sequence conflict" description="In Ref. 5; AAC41997." evidence="2" ref="5">
    <original>S</original>
    <variation>R</variation>
    <location>
        <position position="183"/>
    </location>
</feature>
<feature type="sequence conflict" description="In Ref. 4; AAH51696." evidence="2" ref="4">
    <original>P</original>
    <variation>H</variation>
    <location>
        <position position="198"/>
    </location>
</feature>
<protein>
    <recommendedName>
        <fullName>Zinc finger protein 664</fullName>
    </recommendedName>
    <alternativeName>
        <fullName evidence="3">Zinc finger protein 176</fullName>
    </alternativeName>
    <alternativeName>
        <fullName>Zinc finger protein from organ of Corti</fullName>
    </alternativeName>
</protein>
<dbReference type="EMBL" id="AK056034">
    <property type="protein sequence ID" value="BAG51609.1"/>
    <property type="molecule type" value="mRNA"/>
</dbReference>
<dbReference type="EMBL" id="AL834266">
    <property type="protein sequence ID" value="CAD38941.1"/>
    <property type="molecule type" value="mRNA"/>
</dbReference>
<dbReference type="EMBL" id="BX647762">
    <property type="protein sequence ID" value="CAH10567.1"/>
    <property type="molecule type" value="mRNA"/>
</dbReference>
<dbReference type="EMBL" id="CH471054">
    <property type="protein sequence ID" value="EAW98441.1"/>
    <property type="molecule type" value="Genomic_DNA"/>
</dbReference>
<dbReference type="EMBL" id="BC051696">
    <property type="protein sequence ID" value="AAH51696.1"/>
    <property type="molecule type" value="mRNA"/>
</dbReference>
<dbReference type="EMBL" id="BC093848">
    <property type="protein sequence ID" value="AAH93848.1"/>
    <property type="molecule type" value="mRNA"/>
</dbReference>
<dbReference type="EMBL" id="BC101530">
    <property type="protein sequence ID" value="AAI01531.1"/>
    <property type="molecule type" value="mRNA"/>
</dbReference>
<dbReference type="EMBL" id="L41669">
    <property type="protein sequence ID" value="AAC41997.1"/>
    <property type="molecule type" value="mRNA"/>
</dbReference>
<dbReference type="CCDS" id="CCDS9257.1"/>
<dbReference type="PIR" id="S70007">
    <property type="entry name" value="S70007"/>
</dbReference>
<dbReference type="RefSeq" id="NP_001191227.1">
    <property type="nucleotide sequence ID" value="NM_001204298.2"/>
</dbReference>
<dbReference type="RefSeq" id="NP_689650.1">
    <property type="nucleotide sequence ID" value="NM_152437.3"/>
</dbReference>
<dbReference type="SMR" id="Q8N3J9"/>
<dbReference type="BioGRID" id="126844">
    <property type="interactions" value="30"/>
</dbReference>
<dbReference type="FunCoup" id="Q8N3J9">
    <property type="interactions" value="580"/>
</dbReference>
<dbReference type="IntAct" id="Q8N3J9">
    <property type="interactions" value="24"/>
</dbReference>
<dbReference type="STRING" id="9606.ENSP00000441405"/>
<dbReference type="iPTMnet" id="Q8N3J9"/>
<dbReference type="PhosphoSitePlus" id="Q8N3J9"/>
<dbReference type="BioMuta" id="ZNF664"/>
<dbReference type="DMDM" id="74759851"/>
<dbReference type="jPOST" id="Q8N3J9"/>
<dbReference type="MassIVE" id="Q8N3J9"/>
<dbReference type="PaxDb" id="9606-ENSP00000441405"/>
<dbReference type="PeptideAtlas" id="Q8N3J9"/>
<dbReference type="ProteomicsDB" id="71817"/>
<dbReference type="Pumba" id="Q8N3J9"/>
<dbReference type="Antibodypedia" id="31859">
    <property type="antibodies" value="39 antibodies from 16 providers"/>
</dbReference>
<dbReference type="DNASU" id="144348"/>
<dbReference type="Ensembl" id="ENST00000337815.9">
    <property type="protein sequence ID" value="ENSP00000337320.4"/>
    <property type="gene ID" value="ENSG00000179195.16"/>
</dbReference>
<dbReference type="Ensembl" id="ENST00000392404.7">
    <property type="protein sequence ID" value="ENSP00000376205.3"/>
    <property type="gene ID" value="ENSG00000179195.16"/>
</dbReference>
<dbReference type="Ensembl" id="ENST00000538932.6">
    <property type="protein sequence ID" value="ENSP00000440645.1"/>
    <property type="gene ID" value="ENSG00000179195.16"/>
</dbReference>
<dbReference type="Ensembl" id="ENST00000539644.5">
    <property type="protein sequence ID" value="ENSP00000441405.1"/>
    <property type="gene ID" value="ENSG00000179195.16"/>
</dbReference>
<dbReference type="GeneID" id="144348"/>
<dbReference type="KEGG" id="hsa:144348"/>
<dbReference type="MANE-Select" id="ENST00000337815.9">
    <property type="protein sequence ID" value="ENSP00000337320.4"/>
    <property type="RefSeq nucleotide sequence ID" value="NM_152437.3"/>
    <property type="RefSeq protein sequence ID" value="NP_689650.1"/>
</dbReference>
<dbReference type="UCSC" id="uc001uga.4">
    <property type="organism name" value="human"/>
</dbReference>
<dbReference type="AGR" id="HGNC:25406"/>
<dbReference type="CTD" id="144348"/>
<dbReference type="DisGeNET" id="144348"/>
<dbReference type="GeneCards" id="ZNF664"/>
<dbReference type="HGNC" id="HGNC:25406">
    <property type="gene designation" value="ZNF664"/>
</dbReference>
<dbReference type="HPA" id="ENSG00000179195">
    <property type="expression patterns" value="Low tissue specificity"/>
</dbReference>
<dbReference type="MIM" id="617890">
    <property type="type" value="gene"/>
</dbReference>
<dbReference type="neXtProt" id="NX_Q8N3J9"/>
<dbReference type="OpenTargets" id="ENSG00000179195"/>
<dbReference type="PharmGKB" id="PA37547"/>
<dbReference type="VEuPathDB" id="HostDB:ENSG00000179195"/>
<dbReference type="eggNOG" id="KOG1721">
    <property type="taxonomic scope" value="Eukaryota"/>
</dbReference>
<dbReference type="GeneTree" id="ENSGT01120000271865"/>
<dbReference type="HOGENOM" id="CLU_002678_2_1_1"/>
<dbReference type="InParanoid" id="Q8N3J9"/>
<dbReference type="OMA" id="MAECDEN"/>
<dbReference type="OrthoDB" id="654211at2759"/>
<dbReference type="PAN-GO" id="Q8N3J9">
    <property type="GO annotations" value="3 GO annotations based on evolutionary models"/>
</dbReference>
<dbReference type="PhylomeDB" id="Q8N3J9"/>
<dbReference type="TreeFam" id="TF337055"/>
<dbReference type="PathwayCommons" id="Q8N3J9"/>
<dbReference type="Reactome" id="R-HSA-212436">
    <property type="pathway name" value="Generic Transcription Pathway"/>
</dbReference>
<dbReference type="SignaLink" id="Q8N3J9"/>
<dbReference type="BioGRID-ORCS" id="144348">
    <property type="hits" value="11 hits in 1165 CRISPR screens"/>
</dbReference>
<dbReference type="ChiTaRS" id="ZNF664">
    <property type="organism name" value="human"/>
</dbReference>
<dbReference type="GeneWiki" id="ZNF664"/>
<dbReference type="GenomeRNAi" id="144348"/>
<dbReference type="Pharos" id="Q8N3J9">
    <property type="development level" value="Tdark"/>
</dbReference>
<dbReference type="PRO" id="PR:Q8N3J9"/>
<dbReference type="Proteomes" id="UP000005640">
    <property type="component" value="Chromosome 12"/>
</dbReference>
<dbReference type="RNAct" id="Q8N3J9">
    <property type="molecule type" value="protein"/>
</dbReference>
<dbReference type="Bgee" id="ENSG00000179195">
    <property type="expression patterns" value="Expressed in ileal mucosa and 193 other cell types or tissues"/>
</dbReference>
<dbReference type="ExpressionAtlas" id="Q8N3J9">
    <property type="expression patterns" value="baseline and differential"/>
</dbReference>
<dbReference type="GO" id="GO:0005634">
    <property type="term" value="C:nucleus"/>
    <property type="evidence" value="ECO:0000314"/>
    <property type="project" value="LIFEdb"/>
</dbReference>
<dbReference type="GO" id="GO:0000981">
    <property type="term" value="F:DNA-binding transcription factor activity, RNA polymerase II-specific"/>
    <property type="evidence" value="ECO:0000318"/>
    <property type="project" value="GO_Central"/>
</dbReference>
<dbReference type="GO" id="GO:0000978">
    <property type="term" value="F:RNA polymerase II cis-regulatory region sequence-specific DNA binding"/>
    <property type="evidence" value="ECO:0000318"/>
    <property type="project" value="GO_Central"/>
</dbReference>
<dbReference type="GO" id="GO:0008270">
    <property type="term" value="F:zinc ion binding"/>
    <property type="evidence" value="ECO:0007669"/>
    <property type="project" value="UniProtKB-KW"/>
</dbReference>
<dbReference type="GO" id="GO:0006355">
    <property type="term" value="P:regulation of DNA-templated transcription"/>
    <property type="evidence" value="ECO:0000318"/>
    <property type="project" value="GO_Central"/>
</dbReference>
<dbReference type="FunFam" id="3.30.160.60:FF:000029">
    <property type="entry name" value="GLI family zinc finger 4"/>
    <property type="match status" value="3"/>
</dbReference>
<dbReference type="FunFam" id="3.30.160.60:FF:000661">
    <property type="entry name" value="paternally-expressed gene 3 protein-like"/>
    <property type="match status" value="1"/>
</dbReference>
<dbReference type="FunFam" id="3.30.160.60:FF:002090">
    <property type="entry name" value="Zinc finger protein 473"/>
    <property type="match status" value="1"/>
</dbReference>
<dbReference type="FunFam" id="3.30.160.60:FF:001256">
    <property type="entry name" value="zinc finger protein 664"/>
    <property type="match status" value="1"/>
</dbReference>
<dbReference type="FunFam" id="3.30.160.60:FF:001310">
    <property type="entry name" value="zinc finger protein 664"/>
    <property type="match status" value="1"/>
</dbReference>
<dbReference type="FunFam" id="3.30.160.60:FF:001493">
    <property type="entry name" value="zinc finger protein 664"/>
    <property type="match status" value="1"/>
</dbReference>
<dbReference type="Gene3D" id="3.30.160.60">
    <property type="entry name" value="Classic Zinc Finger"/>
    <property type="match status" value="9"/>
</dbReference>
<dbReference type="InterPro" id="IPR036236">
    <property type="entry name" value="Znf_C2H2_sf"/>
</dbReference>
<dbReference type="InterPro" id="IPR013087">
    <property type="entry name" value="Znf_C2H2_type"/>
</dbReference>
<dbReference type="PANTHER" id="PTHR24394">
    <property type="entry name" value="ZINC FINGER PROTEIN"/>
    <property type="match status" value="1"/>
</dbReference>
<dbReference type="PANTHER" id="PTHR24394:SF48">
    <property type="entry name" value="ZINC FINGER PROTEIN 771"/>
    <property type="match status" value="1"/>
</dbReference>
<dbReference type="Pfam" id="PF00096">
    <property type="entry name" value="zf-C2H2"/>
    <property type="match status" value="8"/>
</dbReference>
<dbReference type="SMART" id="SM00355">
    <property type="entry name" value="ZnF_C2H2"/>
    <property type="match status" value="9"/>
</dbReference>
<dbReference type="SUPFAM" id="SSF57667">
    <property type="entry name" value="beta-beta-alpha zinc fingers"/>
    <property type="match status" value="5"/>
</dbReference>
<dbReference type="PROSITE" id="PS00028">
    <property type="entry name" value="ZINC_FINGER_C2H2_1"/>
    <property type="match status" value="9"/>
</dbReference>
<dbReference type="PROSITE" id="PS50157">
    <property type="entry name" value="ZINC_FINGER_C2H2_2"/>
    <property type="match status" value="9"/>
</dbReference>
<gene>
    <name evidence="3" type="primary">ZNF664</name>
    <name type="synonym">ZFOC1</name>
    <name evidence="3" type="synonym">ZNF176</name>
</gene>
<comment type="function">
    <text>May be involved in transcriptional regulation.</text>
</comment>
<comment type="interaction">
    <interactant intactId="EBI-2799450">
        <id>Q8N3J9</id>
    </interactant>
    <interactant intactId="EBI-10311131">
        <id>Q9NP86</id>
        <label>CABP5</label>
    </interactant>
    <organismsDiffer>false</organismsDiffer>
    <experiments>3</experiments>
</comment>
<comment type="interaction">
    <interactant intactId="EBI-2799450">
        <id>Q8N3J9</id>
    </interactant>
    <interactant intactId="EBI-10292696">
        <id>Q96Q77</id>
        <label>CIB3</label>
    </interactant>
    <organismsDiffer>false</organismsDiffer>
    <experiments>3</experiments>
</comment>
<comment type="interaction">
    <interactant intactId="EBI-2799450">
        <id>Q8N3J9</id>
    </interactant>
    <interactant intactId="EBI-448202">
        <id>O95257</id>
        <label>GADD45G</label>
    </interactant>
    <organismsDiffer>false</organismsDiffer>
    <experiments>3</experiments>
</comment>
<comment type="interaction">
    <interactant intactId="EBI-2799450">
        <id>Q8N3J9</id>
    </interactant>
    <interactant intactId="EBI-373456">
        <id>Q9Y3S2</id>
        <label>ZNF330</label>
    </interactant>
    <organismsDiffer>false</organismsDiffer>
    <experiments>3</experiments>
</comment>
<comment type="subcellular location">
    <subcellularLocation>
        <location evidence="2">Nucleus</location>
    </subcellularLocation>
</comment>
<comment type="similarity">
    <text evidence="2">Belongs to the krueppel C2H2-type zinc-finger protein family.</text>
</comment>
<organism>
    <name type="scientific">Homo sapiens</name>
    <name type="common">Human</name>
    <dbReference type="NCBI Taxonomy" id="9606"/>
    <lineage>
        <taxon>Eukaryota</taxon>
        <taxon>Metazoa</taxon>
        <taxon>Chordata</taxon>
        <taxon>Craniata</taxon>
        <taxon>Vertebrata</taxon>
        <taxon>Euteleostomi</taxon>
        <taxon>Mammalia</taxon>
        <taxon>Eutheria</taxon>
        <taxon>Euarchontoglires</taxon>
        <taxon>Primates</taxon>
        <taxon>Haplorrhini</taxon>
        <taxon>Catarrhini</taxon>
        <taxon>Hominidae</taxon>
        <taxon>Homo</taxon>
    </lineage>
</organism>
<accession>Q8N3J9</accession>
<accession>B3KP97</accession>
<accession>Q15914</accession>
<accession>Q3ZCQ7</accession>
<reference key="1">
    <citation type="journal article" date="2004" name="Nat. Genet.">
        <title>Complete sequencing and characterization of 21,243 full-length human cDNAs.</title>
        <authorList>
            <person name="Ota T."/>
            <person name="Suzuki Y."/>
            <person name="Nishikawa T."/>
            <person name="Otsuki T."/>
            <person name="Sugiyama T."/>
            <person name="Irie R."/>
            <person name="Wakamatsu A."/>
            <person name="Hayashi K."/>
            <person name="Sato H."/>
            <person name="Nagai K."/>
            <person name="Kimura K."/>
            <person name="Makita H."/>
            <person name="Sekine M."/>
            <person name="Obayashi M."/>
            <person name="Nishi T."/>
            <person name="Shibahara T."/>
            <person name="Tanaka T."/>
            <person name="Ishii S."/>
            <person name="Yamamoto J."/>
            <person name="Saito K."/>
            <person name="Kawai Y."/>
            <person name="Isono Y."/>
            <person name="Nakamura Y."/>
            <person name="Nagahari K."/>
            <person name="Murakami K."/>
            <person name="Yasuda T."/>
            <person name="Iwayanagi T."/>
            <person name="Wagatsuma M."/>
            <person name="Shiratori A."/>
            <person name="Sudo H."/>
            <person name="Hosoiri T."/>
            <person name="Kaku Y."/>
            <person name="Kodaira H."/>
            <person name="Kondo H."/>
            <person name="Sugawara M."/>
            <person name="Takahashi M."/>
            <person name="Kanda K."/>
            <person name="Yokoi T."/>
            <person name="Furuya T."/>
            <person name="Kikkawa E."/>
            <person name="Omura Y."/>
            <person name="Abe K."/>
            <person name="Kamihara K."/>
            <person name="Katsuta N."/>
            <person name="Sato K."/>
            <person name="Tanikawa M."/>
            <person name="Yamazaki M."/>
            <person name="Ninomiya K."/>
            <person name="Ishibashi T."/>
            <person name="Yamashita H."/>
            <person name="Murakawa K."/>
            <person name="Fujimori K."/>
            <person name="Tanai H."/>
            <person name="Kimata M."/>
            <person name="Watanabe M."/>
            <person name="Hiraoka S."/>
            <person name="Chiba Y."/>
            <person name="Ishida S."/>
            <person name="Ono Y."/>
            <person name="Takiguchi S."/>
            <person name="Watanabe S."/>
            <person name="Yosida M."/>
            <person name="Hotuta T."/>
            <person name="Kusano J."/>
            <person name="Kanehori K."/>
            <person name="Takahashi-Fujii A."/>
            <person name="Hara H."/>
            <person name="Tanase T.-O."/>
            <person name="Nomura Y."/>
            <person name="Togiya S."/>
            <person name="Komai F."/>
            <person name="Hara R."/>
            <person name="Takeuchi K."/>
            <person name="Arita M."/>
            <person name="Imose N."/>
            <person name="Musashino K."/>
            <person name="Yuuki H."/>
            <person name="Oshima A."/>
            <person name="Sasaki N."/>
            <person name="Aotsuka S."/>
            <person name="Yoshikawa Y."/>
            <person name="Matsunawa H."/>
            <person name="Ichihara T."/>
            <person name="Shiohata N."/>
            <person name="Sano S."/>
            <person name="Moriya S."/>
            <person name="Momiyama H."/>
            <person name="Satoh N."/>
            <person name="Takami S."/>
            <person name="Terashima Y."/>
            <person name="Suzuki O."/>
            <person name="Nakagawa S."/>
            <person name="Senoh A."/>
            <person name="Mizoguchi H."/>
            <person name="Goto Y."/>
            <person name="Shimizu F."/>
            <person name="Wakebe H."/>
            <person name="Hishigaki H."/>
            <person name="Watanabe T."/>
            <person name="Sugiyama A."/>
            <person name="Takemoto M."/>
            <person name="Kawakami B."/>
            <person name="Yamazaki M."/>
            <person name="Watanabe K."/>
            <person name="Kumagai A."/>
            <person name="Itakura S."/>
            <person name="Fukuzumi Y."/>
            <person name="Fujimori Y."/>
            <person name="Komiyama M."/>
            <person name="Tashiro H."/>
            <person name="Tanigami A."/>
            <person name="Fujiwara T."/>
            <person name="Ono T."/>
            <person name="Yamada K."/>
            <person name="Fujii Y."/>
            <person name="Ozaki K."/>
            <person name="Hirao M."/>
            <person name="Ohmori Y."/>
            <person name="Kawabata A."/>
            <person name="Hikiji T."/>
            <person name="Kobatake N."/>
            <person name="Inagaki H."/>
            <person name="Ikema Y."/>
            <person name="Okamoto S."/>
            <person name="Okitani R."/>
            <person name="Kawakami T."/>
            <person name="Noguchi S."/>
            <person name="Itoh T."/>
            <person name="Shigeta K."/>
            <person name="Senba T."/>
            <person name="Matsumura K."/>
            <person name="Nakajima Y."/>
            <person name="Mizuno T."/>
            <person name="Morinaga M."/>
            <person name="Sasaki M."/>
            <person name="Togashi T."/>
            <person name="Oyama M."/>
            <person name="Hata H."/>
            <person name="Watanabe M."/>
            <person name="Komatsu T."/>
            <person name="Mizushima-Sugano J."/>
            <person name="Satoh T."/>
            <person name="Shirai Y."/>
            <person name="Takahashi Y."/>
            <person name="Nakagawa K."/>
            <person name="Okumura K."/>
            <person name="Nagase T."/>
            <person name="Nomura N."/>
            <person name="Kikuchi H."/>
            <person name="Masuho Y."/>
            <person name="Yamashita R."/>
            <person name="Nakai K."/>
            <person name="Yada T."/>
            <person name="Nakamura Y."/>
            <person name="Ohara O."/>
            <person name="Isogai T."/>
            <person name="Sugano S."/>
        </authorList>
    </citation>
    <scope>NUCLEOTIDE SEQUENCE [LARGE SCALE MRNA]</scope>
</reference>
<reference key="2">
    <citation type="journal article" date="2007" name="BMC Genomics">
        <title>The full-ORF clone resource of the German cDNA consortium.</title>
        <authorList>
            <person name="Bechtel S."/>
            <person name="Rosenfelder H."/>
            <person name="Duda A."/>
            <person name="Schmidt C.P."/>
            <person name="Ernst U."/>
            <person name="Wellenreuther R."/>
            <person name="Mehrle A."/>
            <person name="Schuster C."/>
            <person name="Bahr A."/>
            <person name="Bloecker H."/>
            <person name="Heubner D."/>
            <person name="Hoerlein A."/>
            <person name="Michel G."/>
            <person name="Wedler H."/>
            <person name="Koehrer K."/>
            <person name="Ottenwaelder B."/>
            <person name="Poustka A."/>
            <person name="Wiemann S."/>
            <person name="Schupp I."/>
        </authorList>
    </citation>
    <scope>NUCLEOTIDE SEQUENCE [LARGE SCALE MRNA]</scope>
    <source>
        <tissue>Amygdala</tissue>
        <tissue>Cervix adenocarcinoma</tissue>
    </source>
</reference>
<reference key="3">
    <citation type="submission" date="2005-07" db="EMBL/GenBank/DDBJ databases">
        <authorList>
            <person name="Mural R.J."/>
            <person name="Istrail S."/>
            <person name="Sutton G.G."/>
            <person name="Florea L."/>
            <person name="Halpern A.L."/>
            <person name="Mobarry C.M."/>
            <person name="Lippert R."/>
            <person name="Walenz B."/>
            <person name="Shatkay H."/>
            <person name="Dew I."/>
            <person name="Miller J.R."/>
            <person name="Flanigan M.J."/>
            <person name="Edwards N.J."/>
            <person name="Bolanos R."/>
            <person name="Fasulo D."/>
            <person name="Halldorsson B.V."/>
            <person name="Hannenhalli S."/>
            <person name="Turner R."/>
            <person name="Yooseph S."/>
            <person name="Lu F."/>
            <person name="Nusskern D.R."/>
            <person name="Shue B.C."/>
            <person name="Zheng X.H."/>
            <person name="Zhong F."/>
            <person name="Delcher A.L."/>
            <person name="Huson D.H."/>
            <person name="Kravitz S.A."/>
            <person name="Mouchard L."/>
            <person name="Reinert K."/>
            <person name="Remington K.A."/>
            <person name="Clark A.G."/>
            <person name="Waterman M.S."/>
            <person name="Eichler E.E."/>
            <person name="Adams M.D."/>
            <person name="Hunkapiller M.W."/>
            <person name="Myers E.W."/>
            <person name="Venter J.C."/>
        </authorList>
    </citation>
    <scope>NUCLEOTIDE SEQUENCE [LARGE SCALE GENOMIC DNA]</scope>
</reference>
<reference key="4">
    <citation type="journal article" date="2004" name="Genome Res.">
        <title>The status, quality, and expansion of the NIH full-length cDNA project: the Mammalian Gene Collection (MGC).</title>
        <authorList>
            <consortium name="The MGC Project Team"/>
        </authorList>
    </citation>
    <scope>NUCLEOTIDE SEQUENCE [LARGE SCALE MRNA]</scope>
    <source>
        <tissue>Brain</tissue>
    </source>
</reference>
<reference key="5">
    <citation type="journal article" date="1996" name="Biochim. Biophys. Acta">
        <title>A novel zinc finger gene preferentially expressed in the retina and the organ of Corti localizes to human chromosome 12q24.3.</title>
        <authorList>
            <person name="Rivolta M.N."/>
            <person name="Negrini C."/>
            <person name="Wilcox E.R."/>
        </authorList>
    </citation>
    <scope>NUCLEOTIDE SEQUENCE [MRNA] OF 24-207</scope>
    <source>
        <tissue>Retina</tissue>
    </source>
</reference>
<reference key="6">
    <citation type="journal article" date="2017" name="Nat. Struct. Mol. Biol.">
        <title>Site-specific mapping of the human SUMO proteome reveals co-modification with phosphorylation.</title>
        <authorList>
            <person name="Hendriks I.A."/>
            <person name="Lyon D."/>
            <person name="Young C."/>
            <person name="Jensen L.J."/>
            <person name="Vertegaal A.C."/>
            <person name="Nielsen M.L."/>
        </authorList>
    </citation>
    <scope>SUMOYLATION [LARGE SCALE ANALYSIS] AT LYS-257</scope>
    <scope>IDENTIFICATION BY MASS SPECTROMETRY [LARGE SCALE ANALYSIS]</scope>
</reference>
<evidence type="ECO:0000255" key="1">
    <source>
        <dbReference type="PROSITE-ProRule" id="PRU00042"/>
    </source>
</evidence>
<evidence type="ECO:0000305" key="2"/>
<evidence type="ECO:0000312" key="3">
    <source>
        <dbReference type="HGNC" id="HGNC:25406"/>
    </source>
</evidence>
<evidence type="ECO:0007744" key="4">
    <source>
    </source>
</evidence>